<dbReference type="EMBL" id="EF494899">
    <property type="protein sequence ID" value="ABS30721.1"/>
    <property type="status" value="ALT_INIT"/>
    <property type="molecule type" value="mRNA"/>
</dbReference>
<dbReference type="EMBL" id="EF494900">
    <property type="protein sequence ID" value="ABS30722.1"/>
    <property type="status" value="ALT_INIT"/>
    <property type="molecule type" value="mRNA"/>
</dbReference>
<dbReference type="EMBL" id="EF494901">
    <property type="protein sequence ID" value="ABS30723.1"/>
    <property type="status" value="ALT_INIT"/>
    <property type="molecule type" value="mRNA"/>
</dbReference>
<dbReference type="EMBL" id="EF494902">
    <property type="protein sequence ID" value="ABS30724.1"/>
    <property type="status" value="ALT_INIT"/>
    <property type="molecule type" value="mRNA"/>
</dbReference>
<dbReference type="EMBL" id="EU099306">
    <property type="protein sequence ID" value="ABU87904.1"/>
    <property type="status" value="ALT_INIT"/>
    <property type="molecule type" value="mRNA"/>
</dbReference>
<dbReference type="EMBL" id="AL627076">
    <property type="status" value="NOT_ANNOTATED_CDS"/>
    <property type="molecule type" value="Genomic_DNA"/>
</dbReference>
<dbReference type="EMBL" id="BX537328">
    <property type="status" value="NOT_ANNOTATED_CDS"/>
    <property type="molecule type" value="Genomic_DNA"/>
</dbReference>
<dbReference type="EMBL" id="BX842671">
    <property type="status" value="NOT_ANNOTATED_CDS"/>
    <property type="molecule type" value="Genomic_DNA"/>
</dbReference>
<dbReference type="CCDS" id="CCDS18475.1">
    <molecule id="A7XV04-2"/>
</dbReference>
<dbReference type="CCDS" id="CCDS51266.1">
    <molecule id="A7XV04-1"/>
</dbReference>
<dbReference type="RefSeq" id="NP_001136247.1">
    <molecule id="A7XV04-1"/>
    <property type="nucleotide sequence ID" value="NM_001142775.1"/>
</dbReference>
<dbReference type="RefSeq" id="NP_808486.2">
    <molecule id="A7XV04-2"/>
    <property type="nucleotide sequence ID" value="NM_177818.3"/>
</dbReference>
<dbReference type="SMR" id="A7XV04"/>
<dbReference type="FunCoup" id="A7XV04">
    <property type="interactions" value="529"/>
</dbReference>
<dbReference type="GlyCosmos" id="A7XV04">
    <property type="glycosylation" value="2 sites, No reported glycans"/>
</dbReference>
<dbReference type="GlyGen" id="A7XV04">
    <property type="glycosylation" value="2 sites"/>
</dbReference>
<dbReference type="PaxDb" id="10090-ENSMUSP00000054822"/>
<dbReference type="DNASU" id="328505"/>
<dbReference type="Ensembl" id="ENSMUST00000055014.11">
    <molecule id="A7XV04-2"/>
    <property type="protein sequence ID" value="ENSMUSP00000054822.5"/>
    <property type="gene ID" value="ENSMUSG00000049214.14"/>
</dbReference>
<dbReference type="Ensembl" id="ENSMUST00000163281.2">
    <molecule id="A7XV04-1"/>
    <property type="protein sequence ID" value="ENSMUSP00000127347.2"/>
    <property type="gene ID" value="ENSMUSG00000049214.14"/>
</dbReference>
<dbReference type="GeneID" id="328505"/>
<dbReference type="KEGG" id="mmu:328505"/>
<dbReference type="UCSC" id="uc008udo.1">
    <molecule id="A7XV04-2"/>
    <property type="organism name" value="mouse"/>
</dbReference>
<dbReference type="UCSC" id="uc012dio.1">
    <molecule id="A7XV04-1"/>
    <property type="organism name" value="mouse"/>
</dbReference>
<dbReference type="UCSC" id="uc029uyq.1">
    <molecule id="A7XV04-3"/>
    <property type="organism name" value="mouse"/>
</dbReference>
<dbReference type="AGR" id="MGI:3041190"/>
<dbReference type="CTD" id="328505"/>
<dbReference type="MGI" id="MGI:3041190">
    <property type="gene designation" value="Skint7"/>
</dbReference>
<dbReference type="VEuPathDB" id="HostDB:ENSMUSG00000049214"/>
<dbReference type="eggNOG" id="ENOG502TCM5">
    <property type="taxonomic scope" value="Eukaryota"/>
</dbReference>
<dbReference type="GeneTree" id="ENSGT00940000164707"/>
<dbReference type="HOGENOM" id="CLU_013137_8_4_1"/>
<dbReference type="InParanoid" id="A7XV04"/>
<dbReference type="OMA" id="QMEWRDN"/>
<dbReference type="OrthoDB" id="9049620at2759"/>
<dbReference type="PhylomeDB" id="A7XV04"/>
<dbReference type="BioGRID-ORCS" id="328505">
    <property type="hits" value="1 hit in 44 CRISPR screens"/>
</dbReference>
<dbReference type="PRO" id="PR:A7XV04"/>
<dbReference type="Proteomes" id="UP000000589">
    <property type="component" value="Chromosome 4"/>
</dbReference>
<dbReference type="RNAct" id="A7XV04">
    <property type="molecule type" value="protein"/>
</dbReference>
<dbReference type="Bgee" id="ENSMUSG00000049214">
    <property type="expression patterns" value="Expressed in zone of skin and 9 other cell types or tissues"/>
</dbReference>
<dbReference type="ExpressionAtlas" id="A7XV04">
    <property type="expression patterns" value="baseline and differential"/>
</dbReference>
<dbReference type="GO" id="GO:0016020">
    <property type="term" value="C:membrane"/>
    <property type="evidence" value="ECO:0007669"/>
    <property type="project" value="UniProtKB-SubCell"/>
</dbReference>
<dbReference type="CDD" id="cd05713">
    <property type="entry name" value="IgV_MOG_like"/>
    <property type="match status" value="1"/>
</dbReference>
<dbReference type="FunFam" id="2.60.40.10:FF:000088">
    <property type="entry name" value="Butyrophilin subfamily 1 member A1"/>
    <property type="match status" value="1"/>
</dbReference>
<dbReference type="FunFam" id="2.60.40.10:FF:000142">
    <property type="entry name" value="V-set domain-containing T-cell activation inhibitor 1"/>
    <property type="match status" value="1"/>
</dbReference>
<dbReference type="Gene3D" id="2.60.40.10">
    <property type="entry name" value="Immunoglobulins"/>
    <property type="match status" value="2"/>
</dbReference>
<dbReference type="InterPro" id="IPR053896">
    <property type="entry name" value="BTN3A2-like_Ig-C"/>
</dbReference>
<dbReference type="InterPro" id="IPR007110">
    <property type="entry name" value="Ig-like_dom"/>
</dbReference>
<dbReference type="InterPro" id="IPR036179">
    <property type="entry name" value="Ig-like_dom_sf"/>
</dbReference>
<dbReference type="InterPro" id="IPR013783">
    <property type="entry name" value="Ig-like_fold"/>
</dbReference>
<dbReference type="InterPro" id="IPR003599">
    <property type="entry name" value="Ig_sub"/>
</dbReference>
<dbReference type="InterPro" id="IPR013106">
    <property type="entry name" value="Ig_V-set"/>
</dbReference>
<dbReference type="InterPro" id="IPR050504">
    <property type="entry name" value="IgSF_BTN/MOG"/>
</dbReference>
<dbReference type="PANTHER" id="PTHR24100">
    <property type="entry name" value="BUTYROPHILIN"/>
    <property type="match status" value="1"/>
</dbReference>
<dbReference type="PANTHER" id="PTHR24100:SF51">
    <property type="entry name" value="SELECTION AND UPKEEP OF INTRAEPITHELIAL T-CELLS PROTEIN 7-RELATED"/>
    <property type="match status" value="1"/>
</dbReference>
<dbReference type="Pfam" id="PF22705">
    <property type="entry name" value="C2-set_3"/>
    <property type="match status" value="1"/>
</dbReference>
<dbReference type="Pfam" id="PF07686">
    <property type="entry name" value="V-set"/>
    <property type="match status" value="1"/>
</dbReference>
<dbReference type="SMART" id="SM00409">
    <property type="entry name" value="IG"/>
    <property type="match status" value="1"/>
</dbReference>
<dbReference type="SMART" id="SM00406">
    <property type="entry name" value="IGv"/>
    <property type="match status" value="1"/>
</dbReference>
<dbReference type="SUPFAM" id="SSF48726">
    <property type="entry name" value="Immunoglobulin"/>
    <property type="match status" value="2"/>
</dbReference>
<dbReference type="PROSITE" id="PS50835">
    <property type="entry name" value="IG_LIKE"/>
    <property type="match status" value="1"/>
</dbReference>
<comment type="function">
    <text evidence="1">May act by engaging a cell surface molecule on immature T-cells in the embryonic thymus.</text>
</comment>
<comment type="subcellular location">
    <subcellularLocation>
        <location evidence="7">Membrane</location>
        <topology evidence="7">Multi-pass membrane protein</topology>
    </subcellularLocation>
</comment>
<comment type="alternative products">
    <event type="alternative splicing"/>
    <isoform>
        <id>A7XV04-1</id>
        <name>1</name>
        <name>A</name>
        <sequence type="displayed"/>
    </isoform>
    <isoform>
        <id>A7XV04-2</id>
        <name>2</name>
        <name>B</name>
        <sequence type="described" ref="VSP_034888 VSP_034889"/>
    </isoform>
    <isoform>
        <id>A7XV04-3</id>
        <name>3</name>
        <name>C</name>
        <sequence type="described" ref="VSP_034890 VSP_034891"/>
    </isoform>
</comment>
<comment type="tissue specificity">
    <text evidence="5">Expressed in skin, thymus, testis and, to a lower extent, bladder.</text>
</comment>
<comment type="miscellaneous">
    <text>Encoded by one of the 11 copies of Skint genes clustered in the D1 region of the chromosome 4.</text>
</comment>
<comment type="similarity">
    <text evidence="7">Belongs to the SKINT family.</text>
</comment>
<comment type="sequence caution" evidence="7">
    <conflict type="erroneous initiation">
        <sequence resource="EMBL-CDS" id="ABS30721"/>
    </conflict>
    <text>Truncated N-terminus.</text>
</comment>
<comment type="sequence caution" evidence="7">
    <conflict type="erroneous initiation">
        <sequence resource="EMBL-CDS" id="ABS30722"/>
    </conflict>
    <text>Truncated N-terminus.</text>
</comment>
<comment type="sequence caution" evidence="7">
    <conflict type="erroneous initiation">
        <sequence resource="EMBL-CDS" id="ABS30723"/>
    </conflict>
    <text>Truncated N-terminus.</text>
</comment>
<comment type="sequence caution" evidence="7">
    <conflict type="erroneous initiation">
        <sequence resource="EMBL-CDS" id="ABS30724"/>
    </conflict>
    <text>Truncated N-terminus.</text>
</comment>
<comment type="sequence caution" evidence="7">
    <conflict type="erroneous initiation">
        <sequence resource="EMBL-CDS" id="ABU87904"/>
    </conflict>
    <text>Truncated N-terminus.</text>
</comment>
<keyword id="KW-0025">Alternative splicing</keyword>
<keyword id="KW-1015">Disulfide bond</keyword>
<keyword id="KW-0325">Glycoprotein</keyword>
<keyword id="KW-0393">Immunoglobulin domain</keyword>
<keyword id="KW-0472">Membrane</keyword>
<keyword id="KW-1185">Reference proteome</keyword>
<keyword id="KW-0677">Repeat</keyword>
<keyword id="KW-0732">Signal</keyword>
<keyword id="KW-0812">Transmembrane</keyword>
<keyword id="KW-1133">Transmembrane helix</keyword>
<feature type="signal peptide" evidence="2">
    <location>
        <begin position="1"/>
        <end position="25"/>
    </location>
</feature>
<feature type="chain" id="PRO_5000271642" description="Selection and upkeep of intraepithelial T-cells protein 7">
    <location>
        <begin position="26"/>
        <end position="395"/>
    </location>
</feature>
<feature type="topological domain" description="Extracellular" evidence="2">
    <location>
        <begin position="26"/>
        <end position="248"/>
    </location>
</feature>
<feature type="transmembrane region" description="Helical" evidence="2">
    <location>
        <begin position="249"/>
        <end position="269"/>
    </location>
</feature>
<feature type="topological domain" description="Cytoplasmic" evidence="2">
    <location>
        <begin position="270"/>
        <end position="287"/>
    </location>
</feature>
<feature type="transmembrane region" description="Helical" evidence="2">
    <location>
        <begin position="288"/>
        <end position="308"/>
    </location>
</feature>
<feature type="topological domain" description="Extracellular" evidence="2">
    <location>
        <begin position="309"/>
        <end position="329"/>
    </location>
</feature>
<feature type="transmembrane region" description="Helical" evidence="2">
    <location>
        <begin position="330"/>
        <end position="350"/>
    </location>
</feature>
<feature type="topological domain" description="Cytoplasmic" evidence="2">
    <location>
        <begin position="351"/>
        <end position="395"/>
    </location>
</feature>
<feature type="domain" description="Ig-like V-type">
    <location>
        <begin position="26"/>
        <end position="141"/>
    </location>
</feature>
<feature type="domain" description="Ig-like C1-type">
    <location>
        <begin position="142"/>
        <end position="233"/>
    </location>
</feature>
<feature type="region of interest" description="Disordered" evidence="4">
    <location>
        <begin position="371"/>
        <end position="395"/>
    </location>
</feature>
<feature type="glycosylation site" description="N-linked (GlcNAc...) asparagine" evidence="2">
    <location>
        <position position="92"/>
    </location>
</feature>
<feature type="glycosylation site" description="N-linked (GlcNAc...) asparagine" evidence="2">
    <location>
        <position position="139"/>
    </location>
</feature>
<feature type="disulfide bond" evidence="3">
    <location>
        <begin position="49"/>
        <end position="123"/>
    </location>
</feature>
<feature type="disulfide bond" evidence="3">
    <location>
        <begin position="163"/>
        <end position="217"/>
    </location>
</feature>
<feature type="splice variant" id="VSP_034890" description="In isoform 3." evidence="6">
    <original>A</original>
    <variation>G</variation>
    <location>
        <position position="142"/>
    </location>
</feature>
<feature type="splice variant" id="VSP_034891" description="In isoform 3." evidence="6">
    <location>
        <begin position="143"/>
        <end position="395"/>
    </location>
</feature>
<feature type="splice variant" id="VSP_034888" description="In isoform 2." evidence="6">
    <original>NELFNRDRIWMESLASI</original>
    <variation>SEYCHLAWLLIGKQRQK</variation>
    <location>
        <begin position="236"/>
        <end position="252"/>
    </location>
</feature>
<feature type="splice variant" id="VSP_034889" description="In isoform 2." evidence="6">
    <location>
        <begin position="253"/>
        <end position="395"/>
    </location>
</feature>
<feature type="sequence conflict" description="In Ref. 1; ABS30722/ABS30724." evidence="7" ref="1">
    <original>F</original>
    <variation>S</variation>
    <location>
        <position position="7"/>
    </location>
</feature>
<feature type="sequence conflict" description="In Ref. 1; ABS30722/ABS30724." evidence="7" ref="1">
    <original>I</original>
    <variation>F</variation>
    <location>
        <position position="101"/>
    </location>
</feature>
<feature type="sequence conflict" description="In Ref. 1; ABS30722/ABS30724." evidence="7" ref="1">
    <original>P</original>
    <variation>L</variation>
    <location>
        <position position="120"/>
    </location>
</feature>
<feature type="sequence conflict" description="In Ref. 1; ABS30722/ABS30724." evidence="7" ref="1">
    <original>A</original>
    <variation>V</variation>
    <location>
        <position position="133"/>
    </location>
</feature>
<feature type="sequence conflict" description="In Ref. 1; ABS30722." evidence="7" ref="1">
    <original>RQK</original>
    <variation>R</variation>
    <location sequence="A7XV04-2">
        <begin position="250"/>
        <end position="252"/>
    </location>
</feature>
<protein>
    <recommendedName>
        <fullName>Selection and upkeep of intraepithelial T-cells protein 7</fullName>
        <shortName>Skint-7</shortName>
    </recommendedName>
</protein>
<organism>
    <name type="scientific">Mus musculus</name>
    <name type="common">Mouse</name>
    <dbReference type="NCBI Taxonomy" id="10090"/>
    <lineage>
        <taxon>Eukaryota</taxon>
        <taxon>Metazoa</taxon>
        <taxon>Chordata</taxon>
        <taxon>Craniata</taxon>
        <taxon>Vertebrata</taxon>
        <taxon>Euteleostomi</taxon>
        <taxon>Mammalia</taxon>
        <taxon>Eutheria</taxon>
        <taxon>Euarchontoglires</taxon>
        <taxon>Glires</taxon>
        <taxon>Rodentia</taxon>
        <taxon>Myomorpha</taxon>
        <taxon>Muroidea</taxon>
        <taxon>Muridae</taxon>
        <taxon>Murinae</taxon>
        <taxon>Mus</taxon>
        <taxon>Mus</taxon>
    </lineage>
</organism>
<evidence type="ECO:0000250" key="1"/>
<evidence type="ECO:0000255" key="2"/>
<evidence type="ECO:0000255" key="3">
    <source>
        <dbReference type="PROSITE-ProRule" id="PRU00114"/>
    </source>
</evidence>
<evidence type="ECO:0000256" key="4">
    <source>
        <dbReference type="SAM" id="MobiDB-lite"/>
    </source>
</evidence>
<evidence type="ECO:0000269" key="5">
    <source>
    </source>
</evidence>
<evidence type="ECO:0000303" key="6">
    <source>
    </source>
</evidence>
<evidence type="ECO:0000305" key="7"/>
<proteinExistence type="evidence at transcript level"/>
<name>SKIT7_MOUSE</name>
<sequence>MMKPEFFCFSGFCVYFLFLQVVVSSEKLRVTTPTRHLLARVGGQAELSCQVIPPHSVMHMEVRWFRSGHSQPVYLYRGGHKMSEEAAPEYANRTEFVKEAIGEGKVSLRIHNINILDDGPYQCSFNGSGFIDAAIMNLNVTAVGLETEIHVQAPDADGVMVECNSGGWFPRPQMEWRDSKGATLPHSLKSYSQDEARFFYMKMTLLLTNMSHGSIICCIFNPVTGEEKQTSIILANELFNRDRIWMESLASIVWIMLSVYILYIICFYWRTGCASGCLSKCFCVVTSWPVQIVHLLFCTGTFFAIYLPHRSRVSLSDPQFPLYNNWITELLFVILFLTICFALPIILLFIQFQFTSLTKWEKNKDGIMDQPRLGKAHETSSLYRKKTGKSWEQEK</sequence>
<gene>
    <name type="primary">Skint7</name>
</gene>
<reference key="1">
    <citation type="journal article" date="2008" name="Nat. Genet.">
        <title>Skint1, the prototype of a newly identified immunoglobulin superfamily gene cluster, positively selects epidermal gammadelta T cells.</title>
        <authorList>
            <person name="Boyden L.M."/>
            <person name="Lewis J.M."/>
            <person name="Barbee S.D."/>
            <person name="Bas A."/>
            <person name="Girardi M."/>
            <person name="Hayday A.C."/>
            <person name="Tigelaar R.E."/>
            <person name="Lifton R.P."/>
        </authorList>
    </citation>
    <scope>NUCLEOTIDE SEQUENCE [MRNA] (ISOFORMS 1; 2 AND 3)</scope>
    <scope>TISSUE SPECIFICITY</scope>
    <source>
        <strain>C57BL/6J</strain>
        <strain>FVB/NJ</strain>
    </source>
</reference>
<reference key="2">
    <citation type="journal article" date="2009" name="PLoS Biol.">
        <title>Lineage-specific biology revealed by a finished genome assembly of the mouse.</title>
        <authorList>
            <person name="Church D.M."/>
            <person name="Goodstadt L."/>
            <person name="Hillier L.W."/>
            <person name="Zody M.C."/>
            <person name="Goldstein S."/>
            <person name="She X."/>
            <person name="Bult C.J."/>
            <person name="Agarwala R."/>
            <person name="Cherry J.L."/>
            <person name="DiCuccio M."/>
            <person name="Hlavina W."/>
            <person name="Kapustin Y."/>
            <person name="Meric P."/>
            <person name="Maglott D."/>
            <person name="Birtle Z."/>
            <person name="Marques A.C."/>
            <person name="Graves T."/>
            <person name="Zhou S."/>
            <person name="Teague B."/>
            <person name="Potamousis K."/>
            <person name="Churas C."/>
            <person name="Place M."/>
            <person name="Herschleb J."/>
            <person name="Runnheim R."/>
            <person name="Forrest D."/>
            <person name="Amos-Landgraf J."/>
            <person name="Schwartz D.C."/>
            <person name="Cheng Z."/>
            <person name="Lindblad-Toh K."/>
            <person name="Eichler E.E."/>
            <person name="Ponting C.P."/>
        </authorList>
    </citation>
    <scope>NUCLEOTIDE SEQUENCE [LARGE SCALE GENOMIC DNA]</scope>
    <source>
        <strain>C57BL/6J</strain>
    </source>
</reference>
<accession>A7XV04</accession>
<accession>A7TZF5</accession>
<accession>A7TZF6</accession>
<accession>A7TZF7</accession>
<accession>A7TZF8</accession>
<accession>E9Q3C9</accession>
<accession>M9MMJ4</accession>